<reference key="1">
    <citation type="journal article" date="1992" name="Gene">
        <title>Identification of cDNAs encoding two novel rat pancreatic serine proteases.</title>
        <authorList>
            <person name="Kang J."/>
            <person name="Wiegand U."/>
            <person name="Mueller-Hill B."/>
        </authorList>
    </citation>
    <scope>NUCLEOTIDE SEQUENCE [MRNA]</scope>
    <source>
        <tissue>Pancreas</tissue>
    </source>
</reference>
<evidence type="ECO:0000250" key="1"/>
<evidence type="ECO:0000255" key="2">
    <source>
        <dbReference type="PROSITE-ProRule" id="PRU00274"/>
    </source>
</evidence>
<protein>
    <recommendedName>
        <fullName>Trypsin V-A</fullName>
        <ecNumber>3.4.21.4</ecNumber>
    </recommendedName>
</protein>
<sequence length="246" mass="26901">MKICIFFTLLGTVAAFPTEDNDDRIVGGYTCQEHSVPYQVSLNAGSHICGGSLITDQWVLSAAHCYHPQLQVRLGEHNIYEIEGAEQFIDAAKMILHPDYDKWTVDNDIMLIKLKSPATLNSKVSTIPLPQYCPTAGTECLVSGWGVLKFGFESPSVLQCLDAPVLSDSVCHKAYPRQITNNMFCLGFLEGGKDSCQYDSGGPVVCNGEVQGIVSWGDGCALEGKPGVYTKVCNYLNWIHQTIAEN</sequence>
<dbReference type="EC" id="3.4.21.4"/>
<dbReference type="EMBL" id="X59012">
    <property type="protein sequence ID" value="CAA41751.1"/>
    <property type="molecule type" value="mRNA"/>
</dbReference>
<dbReference type="PIR" id="JQ1471">
    <property type="entry name" value="JQ1471"/>
</dbReference>
<dbReference type="RefSeq" id="NP_001101326.1">
    <property type="nucleotide sequence ID" value="NM_001107856.1"/>
</dbReference>
<dbReference type="SMR" id="P32821"/>
<dbReference type="FunCoup" id="P32821">
    <property type="interactions" value="101"/>
</dbReference>
<dbReference type="STRING" id="10116.ENSRNOP00000017673"/>
<dbReference type="MEROPS" id="S01.092"/>
<dbReference type="PaxDb" id="10116-ENSRNOP00000017673"/>
<dbReference type="Ensembl" id="ENSRNOT00000017673.6">
    <property type="protein sequence ID" value="ENSRNOP00000017673.5"/>
    <property type="gene ID" value="ENSRNOG00000013203.6"/>
</dbReference>
<dbReference type="GeneID" id="312273"/>
<dbReference type="KEGG" id="rno:312273"/>
<dbReference type="UCSC" id="RGD:1563848">
    <property type="organism name" value="rat"/>
</dbReference>
<dbReference type="AGR" id="RGD:1563848"/>
<dbReference type="CTD" id="312273"/>
<dbReference type="RGD" id="1563848">
    <property type="gene designation" value="LOC312273"/>
</dbReference>
<dbReference type="eggNOG" id="KOG3627">
    <property type="taxonomic scope" value="Eukaryota"/>
</dbReference>
<dbReference type="GeneTree" id="ENSGT01050000244883"/>
<dbReference type="HOGENOM" id="CLU_006842_7_0_1"/>
<dbReference type="InParanoid" id="P32821"/>
<dbReference type="OMA" id="WIHQTIA"/>
<dbReference type="OrthoDB" id="20460at9989"/>
<dbReference type="TreeFam" id="TF331065"/>
<dbReference type="PRO" id="PR:P32821"/>
<dbReference type="Proteomes" id="UP000002494">
    <property type="component" value="Chromosome 4"/>
</dbReference>
<dbReference type="Bgee" id="ENSRNOG00000013203">
    <property type="expression patterns" value="Expressed in pancreas and 10 other cell types or tissues"/>
</dbReference>
<dbReference type="GO" id="GO:0005615">
    <property type="term" value="C:extracellular space"/>
    <property type="evidence" value="ECO:0000318"/>
    <property type="project" value="GO_Central"/>
</dbReference>
<dbReference type="GO" id="GO:0046872">
    <property type="term" value="F:metal ion binding"/>
    <property type="evidence" value="ECO:0007669"/>
    <property type="project" value="UniProtKB-KW"/>
</dbReference>
<dbReference type="GO" id="GO:0004252">
    <property type="term" value="F:serine-type endopeptidase activity"/>
    <property type="evidence" value="ECO:0000318"/>
    <property type="project" value="GO_Central"/>
</dbReference>
<dbReference type="GO" id="GO:0007586">
    <property type="term" value="P:digestion"/>
    <property type="evidence" value="ECO:0007669"/>
    <property type="project" value="UniProtKB-KW"/>
</dbReference>
<dbReference type="GO" id="GO:0006508">
    <property type="term" value="P:proteolysis"/>
    <property type="evidence" value="ECO:0007669"/>
    <property type="project" value="UniProtKB-KW"/>
</dbReference>
<dbReference type="CDD" id="cd00190">
    <property type="entry name" value="Tryp_SPc"/>
    <property type="match status" value="1"/>
</dbReference>
<dbReference type="FunFam" id="2.40.10.10:FF:000005">
    <property type="entry name" value="Serine protease 37"/>
    <property type="match status" value="1"/>
</dbReference>
<dbReference type="Gene3D" id="2.40.10.10">
    <property type="entry name" value="Trypsin-like serine proteases"/>
    <property type="match status" value="2"/>
</dbReference>
<dbReference type="InterPro" id="IPR009003">
    <property type="entry name" value="Peptidase_S1_PA"/>
</dbReference>
<dbReference type="InterPro" id="IPR043504">
    <property type="entry name" value="Peptidase_S1_PA_chymotrypsin"/>
</dbReference>
<dbReference type="InterPro" id="IPR001314">
    <property type="entry name" value="Peptidase_S1A"/>
</dbReference>
<dbReference type="InterPro" id="IPR050127">
    <property type="entry name" value="Serine_Proteases_S1"/>
</dbReference>
<dbReference type="InterPro" id="IPR001254">
    <property type="entry name" value="Trypsin_dom"/>
</dbReference>
<dbReference type="InterPro" id="IPR018114">
    <property type="entry name" value="TRYPSIN_HIS"/>
</dbReference>
<dbReference type="PANTHER" id="PTHR24264:SF15">
    <property type="entry name" value="RIKEN CDNA 2210010C04 GENE"/>
    <property type="match status" value="1"/>
</dbReference>
<dbReference type="PANTHER" id="PTHR24264">
    <property type="entry name" value="TRYPSIN-RELATED"/>
    <property type="match status" value="1"/>
</dbReference>
<dbReference type="Pfam" id="PF00089">
    <property type="entry name" value="Trypsin"/>
    <property type="match status" value="1"/>
</dbReference>
<dbReference type="PRINTS" id="PR00722">
    <property type="entry name" value="CHYMOTRYPSIN"/>
</dbReference>
<dbReference type="SMART" id="SM00020">
    <property type="entry name" value="Tryp_SPc"/>
    <property type="match status" value="1"/>
</dbReference>
<dbReference type="SUPFAM" id="SSF50494">
    <property type="entry name" value="Trypsin-like serine proteases"/>
    <property type="match status" value="1"/>
</dbReference>
<dbReference type="PROSITE" id="PS50240">
    <property type="entry name" value="TRYPSIN_DOM"/>
    <property type="match status" value="1"/>
</dbReference>
<dbReference type="PROSITE" id="PS00134">
    <property type="entry name" value="TRYPSIN_HIS"/>
    <property type="match status" value="1"/>
</dbReference>
<accession>P32821</accession>
<proteinExistence type="evidence at transcript level"/>
<keyword id="KW-0106">Calcium</keyword>
<keyword id="KW-0222">Digestion</keyword>
<keyword id="KW-1015">Disulfide bond</keyword>
<keyword id="KW-0378">Hydrolase</keyword>
<keyword id="KW-0479">Metal-binding</keyword>
<keyword id="KW-0645">Protease</keyword>
<keyword id="KW-1185">Reference proteome</keyword>
<keyword id="KW-0964">Secreted</keyword>
<keyword id="KW-0720">Serine protease</keyword>
<keyword id="KW-0732">Signal</keyword>
<keyword id="KW-0865">Zymogen</keyword>
<comment type="catalytic activity">
    <reaction>
        <text>Preferential cleavage: Arg-|-Xaa, Lys-|-Xaa.</text>
        <dbReference type="EC" id="3.4.21.4"/>
    </reaction>
</comment>
<comment type="cofactor">
    <cofactor evidence="1">
        <name>Ca(2+)</name>
        <dbReference type="ChEBI" id="CHEBI:29108"/>
    </cofactor>
    <text evidence="1">Binds 1 Ca(2+) ion per subunit.</text>
</comment>
<comment type="subcellular location">
    <subcellularLocation>
        <location>Secreted</location>
        <location>Extracellular space</location>
    </subcellularLocation>
</comment>
<comment type="similarity">
    <text evidence="2">Belongs to the peptidase S1 family.</text>
</comment>
<organism>
    <name type="scientific">Rattus norvegicus</name>
    <name type="common">Rat</name>
    <dbReference type="NCBI Taxonomy" id="10116"/>
    <lineage>
        <taxon>Eukaryota</taxon>
        <taxon>Metazoa</taxon>
        <taxon>Chordata</taxon>
        <taxon>Craniata</taxon>
        <taxon>Vertebrata</taxon>
        <taxon>Euteleostomi</taxon>
        <taxon>Mammalia</taxon>
        <taxon>Eutheria</taxon>
        <taxon>Euarchontoglires</taxon>
        <taxon>Glires</taxon>
        <taxon>Rodentia</taxon>
        <taxon>Myomorpha</taxon>
        <taxon>Muroidea</taxon>
        <taxon>Muridae</taxon>
        <taxon>Murinae</taxon>
        <taxon>Rattus</taxon>
    </lineage>
</organism>
<feature type="signal peptide">
    <location>
        <begin position="1"/>
        <end position="15"/>
    </location>
</feature>
<feature type="propeptide" id="PRO_0000028215" description="Activation peptide">
    <location>
        <begin position="16"/>
        <end position="24"/>
    </location>
</feature>
<feature type="chain" id="PRO_0000028216" description="Trypsin V-A">
    <location>
        <begin position="25"/>
        <end position="246"/>
    </location>
</feature>
<feature type="domain" description="Peptidase S1" evidence="2">
    <location>
        <begin position="25"/>
        <end position="244"/>
    </location>
</feature>
<feature type="active site" description="Charge relay system" evidence="1">
    <location>
        <position position="64"/>
    </location>
</feature>
<feature type="active site" description="Charge relay system" evidence="1">
    <location>
        <position position="108"/>
    </location>
</feature>
<feature type="active site" description="Charge relay system" evidence="1">
    <location>
        <position position="200"/>
    </location>
</feature>
<feature type="binding site" evidence="1">
    <location>
        <position position="76"/>
    </location>
    <ligand>
        <name>Ca(2+)</name>
        <dbReference type="ChEBI" id="CHEBI:29108"/>
    </ligand>
</feature>
<feature type="binding site" evidence="1">
    <location>
        <position position="78"/>
    </location>
    <ligand>
        <name>Ca(2+)</name>
        <dbReference type="ChEBI" id="CHEBI:29108"/>
    </ligand>
</feature>
<feature type="binding site" evidence="1">
    <location>
        <position position="86"/>
    </location>
    <ligand>
        <name>Ca(2+)</name>
        <dbReference type="ChEBI" id="CHEBI:29108"/>
    </ligand>
</feature>
<feature type="site" description="Required for specificity" evidence="1">
    <location>
        <position position="194"/>
    </location>
</feature>
<feature type="disulfide bond" evidence="2">
    <location>
        <begin position="31"/>
        <end position="160"/>
    </location>
</feature>
<feature type="disulfide bond" evidence="2">
    <location>
        <begin position="49"/>
        <end position="65"/>
    </location>
</feature>
<feature type="disulfide bond" evidence="2">
    <location>
        <begin position="133"/>
        <end position="233"/>
    </location>
</feature>
<feature type="disulfide bond" evidence="2">
    <location>
        <begin position="140"/>
        <end position="206"/>
    </location>
</feature>
<feature type="disulfide bond" evidence="2">
    <location>
        <begin position="171"/>
        <end position="185"/>
    </location>
</feature>
<feature type="disulfide bond" evidence="2">
    <location>
        <begin position="196"/>
        <end position="220"/>
    </location>
</feature>
<name>TRYA_RAT</name>